<evidence type="ECO:0000255" key="1">
    <source>
        <dbReference type="HAMAP-Rule" id="MF_00372"/>
    </source>
</evidence>
<feature type="chain" id="PRO_0000306483" description="Imidazolonepropionase">
    <location>
        <begin position="1"/>
        <end position="396"/>
    </location>
</feature>
<feature type="binding site" evidence="1">
    <location>
        <position position="69"/>
    </location>
    <ligand>
        <name>Fe(3+)</name>
        <dbReference type="ChEBI" id="CHEBI:29034"/>
    </ligand>
</feature>
<feature type="binding site" evidence="1">
    <location>
        <position position="69"/>
    </location>
    <ligand>
        <name>Zn(2+)</name>
        <dbReference type="ChEBI" id="CHEBI:29105"/>
    </ligand>
</feature>
<feature type="binding site" evidence="1">
    <location>
        <position position="71"/>
    </location>
    <ligand>
        <name>Fe(3+)</name>
        <dbReference type="ChEBI" id="CHEBI:29034"/>
    </ligand>
</feature>
<feature type="binding site" evidence="1">
    <location>
        <position position="71"/>
    </location>
    <ligand>
        <name>Zn(2+)</name>
        <dbReference type="ChEBI" id="CHEBI:29105"/>
    </ligand>
</feature>
<feature type="binding site" evidence="1">
    <location>
        <position position="78"/>
    </location>
    <ligand>
        <name>4-imidazolone-5-propanoate</name>
        <dbReference type="ChEBI" id="CHEBI:77893"/>
    </ligand>
</feature>
<feature type="binding site" evidence="1">
    <location>
        <position position="136"/>
    </location>
    <ligand>
        <name>4-imidazolone-5-propanoate</name>
        <dbReference type="ChEBI" id="CHEBI:77893"/>
    </ligand>
</feature>
<feature type="binding site" evidence="1">
    <location>
        <position position="136"/>
    </location>
    <ligand>
        <name>N-formimidoyl-L-glutamate</name>
        <dbReference type="ChEBI" id="CHEBI:58928"/>
    </ligand>
</feature>
<feature type="binding site" evidence="1">
    <location>
        <position position="163"/>
    </location>
    <ligand>
        <name>4-imidazolone-5-propanoate</name>
        <dbReference type="ChEBI" id="CHEBI:77893"/>
    </ligand>
</feature>
<feature type="binding site" evidence="1">
    <location>
        <position position="224"/>
    </location>
    <ligand>
        <name>Fe(3+)</name>
        <dbReference type="ChEBI" id="CHEBI:29034"/>
    </ligand>
</feature>
<feature type="binding site" evidence="1">
    <location>
        <position position="224"/>
    </location>
    <ligand>
        <name>Zn(2+)</name>
        <dbReference type="ChEBI" id="CHEBI:29105"/>
    </ligand>
</feature>
<feature type="binding site" evidence="1">
    <location>
        <position position="227"/>
    </location>
    <ligand>
        <name>4-imidazolone-5-propanoate</name>
        <dbReference type="ChEBI" id="CHEBI:77893"/>
    </ligand>
</feature>
<feature type="binding site" evidence="1">
    <location>
        <position position="298"/>
    </location>
    <ligand>
        <name>Fe(3+)</name>
        <dbReference type="ChEBI" id="CHEBI:29034"/>
    </ligand>
</feature>
<feature type="binding site" evidence="1">
    <location>
        <position position="298"/>
    </location>
    <ligand>
        <name>Zn(2+)</name>
        <dbReference type="ChEBI" id="CHEBI:29105"/>
    </ligand>
</feature>
<feature type="binding site" evidence="1">
    <location>
        <position position="300"/>
    </location>
    <ligand>
        <name>N-formimidoyl-L-glutamate</name>
        <dbReference type="ChEBI" id="CHEBI:58928"/>
    </ligand>
</feature>
<feature type="binding site" evidence="1">
    <location>
        <position position="302"/>
    </location>
    <ligand>
        <name>N-formimidoyl-L-glutamate</name>
        <dbReference type="ChEBI" id="CHEBI:58928"/>
    </ligand>
</feature>
<feature type="binding site" evidence="1">
    <location>
        <position position="303"/>
    </location>
    <ligand>
        <name>4-imidazolone-5-propanoate</name>
        <dbReference type="ChEBI" id="CHEBI:77893"/>
    </ligand>
</feature>
<proteinExistence type="inferred from homology"/>
<dbReference type="EC" id="3.5.2.7" evidence="1"/>
<dbReference type="EMBL" id="AE017283">
    <property type="protein sequence ID" value="AAT83875.1"/>
    <property type="molecule type" value="Genomic_DNA"/>
</dbReference>
<dbReference type="RefSeq" id="WP_002516336.1">
    <property type="nucleotide sequence ID" value="NZ_CP025935.1"/>
</dbReference>
<dbReference type="SMR" id="Q6A5T8"/>
<dbReference type="EnsemblBacteria" id="AAT83875">
    <property type="protein sequence ID" value="AAT83875"/>
    <property type="gene ID" value="PPA2169"/>
</dbReference>
<dbReference type="GeneID" id="92858098"/>
<dbReference type="KEGG" id="pac:PPA2169"/>
<dbReference type="eggNOG" id="COG1228">
    <property type="taxonomic scope" value="Bacteria"/>
</dbReference>
<dbReference type="HOGENOM" id="CLU_041647_1_0_11"/>
<dbReference type="UniPathway" id="UPA00379">
    <property type="reaction ID" value="UER00551"/>
</dbReference>
<dbReference type="Proteomes" id="UP000000603">
    <property type="component" value="Chromosome"/>
</dbReference>
<dbReference type="GO" id="GO:0005737">
    <property type="term" value="C:cytoplasm"/>
    <property type="evidence" value="ECO:0007669"/>
    <property type="project" value="UniProtKB-SubCell"/>
</dbReference>
<dbReference type="GO" id="GO:0050480">
    <property type="term" value="F:imidazolonepropionase activity"/>
    <property type="evidence" value="ECO:0007669"/>
    <property type="project" value="UniProtKB-UniRule"/>
</dbReference>
<dbReference type="GO" id="GO:0005506">
    <property type="term" value="F:iron ion binding"/>
    <property type="evidence" value="ECO:0007669"/>
    <property type="project" value="UniProtKB-UniRule"/>
</dbReference>
<dbReference type="GO" id="GO:0008270">
    <property type="term" value="F:zinc ion binding"/>
    <property type="evidence" value="ECO:0007669"/>
    <property type="project" value="UniProtKB-UniRule"/>
</dbReference>
<dbReference type="GO" id="GO:0019556">
    <property type="term" value="P:L-histidine catabolic process to glutamate and formamide"/>
    <property type="evidence" value="ECO:0007669"/>
    <property type="project" value="UniProtKB-UniPathway"/>
</dbReference>
<dbReference type="GO" id="GO:0019557">
    <property type="term" value="P:L-histidine catabolic process to glutamate and formate"/>
    <property type="evidence" value="ECO:0007669"/>
    <property type="project" value="UniProtKB-UniPathway"/>
</dbReference>
<dbReference type="Gene3D" id="3.20.20.140">
    <property type="entry name" value="Metal-dependent hydrolases"/>
    <property type="match status" value="1"/>
</dbReference>
<dbReference type="Gene3D" id="2.30.40.10">
    <property type="entry name" value="Urease, subunit C, domain 1"/>
    <property type="match status" value="1"/>
</dbReference>
<dbReference type="HAMAP" id="MF_00372">
    <property type="entry name" value="HutI"/>
    <property type="match status" value="1"/>
</dbReference>
<dbReference type="InterPro" id="IPR006680">
    <property type="entry name" value="Amidohydro-rel"/>
</dbReference>
<dbReference type="InterPro" id="IPR005920">
    <property type="entry name" value="HutI"/>
</dbReference>
<dbReference type="InterPro" id="IPR011059">
    <property type="entry name" value="Metal-dep_hydrolase_composite"/>
</dbReference>
<dbReference type="InterPro" id="IPR032466">
    <property type="entry name" value="Metal_Hydrolase"/>
</dbReference>
<dbReference type="NCBIfam" id="TIGR01224">
    <property type="entry name" value="hutI"/>
    <property type="match status" value="1"/>
</dbReference>
<dbReference type="PANTHER" id="PTHR42752">
    <property type="entry name" value="IMIDAZOLONEPROPIONASE"/>
    <property type="match status" value="1"/>
</dbReference>
<dbReference type="PANTHER" id="PTHR42752:SF1">
    <property type="entry name" value="IMIDAZOLONEPROPIONASE-RELATED"/>
    <property type="match status" value="1"/>
</dbReference>
<dbReference type="Pfam" id="PF01979">
    <property type="entry name" value="Amidohydro_1"/>
    <property type="match status" value="1"/>
</dbReference>
<dbReference type="SUPFAM" id="SSF51338">
    <property type="entry name" value="Composite domain of metallo-dependent hydrolases"/>
    <property type="match status" value="1"/>
</dbReference>
<dbReference type="SUPFAM" id="SSF51556">
    <property type="entry name" value="Metallo-dependent hydrolases"/>
    <property type="match status" value="1"/>
</dbReference>
<gene>
    <name evidence="1" type="primary">hutI</name>
    <name type="ordered locus">PPA2169</name>
</gene>
<organism>
    <name type="scientific">Cutibacterium acnes (strain DSM 16379 / KPA171202)</name>
    <name type="common">Propionibacterium acnes</name>
    <dbReference type="NCBI Taxonomy" id="267747"/>
    <lineage>
        <taxon>Bacteria</taxon>
        <taxon>Bacillati</taxon>
        <taxon>Actinomycetota</taxon>
        <taxon>Actinomycetes</taxon>
        <taxon>Propionibacteriales</taxon>
        <taxon>Propionibacteriaceae</taxon>
        <taxon>Cutibacterium</taxon>
    </lineage>
</organism>
<protein>
    <recommendedName>
        <fullName evidence="1">Imidazolonepropionase</fullName>
        <ecNumber evidence="1">3.5.2.7</ecNumber>
    </recommendedName>
    <alternativeName>
        <fullName evidence="1">Imidazolone-5-propionate hydrolase</fullName>
    </alternativeName>
</protein>
<name>HUTI_CUTAK</name>
<comment type="function">
    <text evidence="1">Catalyzes the hydrolytic cleavage of the carbon-nitrogen bond in imidazolone-5-propanoate to yield N-formimidoyl-L-glutamate. It is the third step in the universal histidine degradation pathway.</text>
</comment>
<comment type="catalytic activity">
    <reaction evidence="1">
        <text>4-imidazolone-5-propanoate + H2O = N-formimidoyl-L-glutamate</text>
        <dbReference type="Rhea" id="RHEA:23660"/>
        <dbReference type="ChEBI" id="CHEBI:15377"/>
        <dbReference type="ChEBI" id="CHEBI:58928"/>
        <dbReference type="ChEBI" id="CHEBI:77893"/>
        <dbReference type="EC" id="3.5.2.7"/>
    </reaction>
</comment>
<comment type="cofactor">
    <cofactor evidence="1">
        <name>Zn(2+)</name>
        <dbReference type="ChEBI" id="CHEBI:29105"/>
    </cofactor>
    <cofactor evidence="1">
        <name>Fe(3+)</name>
        <dbReference type="ChEBI" id="CHEBI:29034"/>
    </cofactor>
    <text evidence="1">Binds 1 zinc or iron ion per subunit.</text>
</comment>
<comment type="pathway">
    <text evidence="1">Amino-acid degradation; L-histidine degradation into L-glutamate; N-formimidoyl-L-glutamate from L-histidine: step 3/3.</text>
</comment>
<comment type="subcellular location">
    <subcellularLocation>
        <location evidence="1">Cytoplasm</location>
    </subcellularLocation>
</comment>
<comment type="similarity">
    <text evidence="1">Belongs to the metallo-dependent hydrolases superfamily. HutI family.</text>
</comment>
<sequence>MSIVINNIGLLVTNDPSVGTDELGQIRNAAVVICGDRIAWVGPSAQAPAADHQSDMAGACVIPGFVDSHSHPVFAGDRSDEFDARMNGQRYEAGGILRTVRRTREAPMGFLDAVMTGILDEMARSGTTTVEAKTGYGLDVETEVKLARVASSHTDEVTFLGAHVVAPECQPDEYVRLVCGEMLHAVRPYVRWIDVFCETGAFDPDQTLEILRAGTDAGLGLRLHAAQLGPSEVIPQACELGLAAVDHCTFLSDEDIDALKATGTVATLLPAAEFSTKQPYPDARRLFDAGVTVALATDCNPGTAFTSSIPFCLAIAVREMGMTPEQALWSATAGGAAALHRDDVGVVKPGARADLVSLAAPSWLHLMYRPGVPLIDRVCKAGRFLRLDQPRLRLDG</sequence>
<reference key="1">
    <citation type="journal article" date="2004" name="Science">
        <title>The complete genome sequence of Propionibacterium acnes, a commensal of human skin.</title>
        <authorList>
            <person name="Brueggemann H."/>
            <person name="Henne A."/>
            <person name="Hoster F."/>
            <person name="Liesegang H."/>
            <person name="Wiezer A."/>
            <person name="Strittmatter A."/>
            <person name="Hujer S."/>
            <person name="Duerre P."/>
            <person name="Gottschalk G."/>
        </authorList>
    </citation>
    <scope>NUCLEOTIDE SEQUENCE [LARGE SCALE GENOMIC DNA]</scope>
    <source>
        <strain>DSM 16379 / KPA171202</strain>
    </source>
</reference>
<keyword id="KW-0963">Cytoplasm</keyword>
<keyword id="KW-0369">Histidine metabolism</keyword>
<keyword id="KW-0378">Hydrolase</keyword>
<keyword id="KW-0408">Iron</keyword>
<keyword id="KW-0479">Metal-binding</keyword>
<keyword id="KW-0862">Zinc</keyword>
<accession>Q6A5T8</accession>